<accession>Q09MI7</accession>
<evidence type="ECO:0000255" key="1">
    <source>
        <dbReference type="HAMAP-Rule" id="MF_01323"/>
    </source>
</evidence>
<comment type="function">
    <text evidence="1">DNA-dependent RNA polymerase catalyzes the transcription of DNA into RNA using the four ribonucleoside triphosphates as substrates.</text>
</comment>
<comment type="catalytic activity">
    <reaction evidence="1">
        <text>RNA(n) + a ribonucleoside 5'-triphosphate = RNA(n+1) + diphosphate</text>
        <dbReference type="Rhea" id="RHEA:21248"/>
        <dbReference type="Rhea" id="RHEA-COMP:14527"/>
        <dbReference type="Rhea" id="RHEA-COMP:17342"/>
        <dbReference type="ChEBI" id="CHEBI:33019"/>
        <dbReference type="ChEBI" id="CHEBI:61557"/>
        <dbReference type="ChEBI" id="CHEBI:140395"/>
        <dbReference type="EC" id="2.7.7.6"/>
    </reaction>
</comment>
<comment type="cofactor">
    <cofactor evidence="1">
        <name>Mg(2+)</name>
        <dbReference type="ChEBI" id="CHEBI:18420"/>
    </cofactor>
    <text evidence="1">Binds 1 Mg(2+) ion per subunit.</text>
</comment>
<comment type="cofactor">
    <cofactor evidence="1">
        <name>Zn(2+)</name>
        <dbReference type="ChEBI" id="CHEBI:29105"/>
    </cofactor>
    <text evidence="1">Binds 1 Zn(2+) ion per subunit.</text>
</comment>
<comment type="subunit">
    <text evidence="1">In plastids the minimal PEP RNA polymerase catalytic core is composed of four subunits: alpha, beta, beta', and beta''. When a (nuclear-encoded) sigma factor is associated with the core the holoenzyme is formed, which can initiate transcription.</text>
</comment>
<comment type="subcellular location">
    <subcellularLocation>
        <location evidence="1">Plastid</location>
        <location evidence="1">Chloroplast</location>
    </subcellularLocation>
</comment>
<comment type="similarity">
    <text evidence="1">Belongs to the RNA polymerase beta' chain family. RpoC1 subfamily.</text>
</comment>
<proteinExistence type="inferred from homology"/>
<protein>
    <recommendedName>
        <fullName evidence="1">DNA-directed RNA polymerase subunit beta'</fullName>
        <ecNumber evidence="1">2.7.7.6</ecNumber>
    </recommendedName>
    <alternativeName>
        <fullName evidence="1">PEP</fullName>
    </alternativeName>
    <alternativeName>
        <fullName evidence="1">Plastid-encoded RNA polymerase subunit beta'</fullName>
        <shortName evidence="1">RNA polymerase subunit beta'</shortName>
    </alternativeName>
</protein>
<gene>
    <name evidence="1" type="primary">rpoC1</name>
</gene>
<name>RPOC1_CITSI</name>
<reference key="1">
    <citation type="journal article" date="2006" name="BMC Plant Biol.">
        <title>The complete chloroplast genome sequence of Citrus sinensis (L.) Osbeck var 'Ridge Pineapple': organization and phylogenetic relationships to other angiosperms.</title>
        <authorList>
            <person name="Bausher M.G."/>
            <person name="Singh N.D."/>
            <person name="Lee S.-B."/>
            <person name="Jansen R.K."/>
            <person name="Daniell H."/>
        </authorList>
    </citation>
    <scope>NUCLEOTIDE SEQUENCE [LARGE SCALE GENOMIC DNA]</scope>
    <source>
        <strain>cv. Osbeck var. Ridge Pineapple</strain>
    </source>
</reference>
<keyword id="KW-0150">Chloroplast</keyword>
<keyword id="KW-0240">DNA-directed RNA polymerase</keyword>
<keyword id="KW-0460">Magnesium</keyword>
<keyword id="KW-0479">Metal-binding</keyword>
<keyword id="KW-0548">Nucleotidyltransferase</keyword>
<keyword id="KW-0934">Plastid</keyword>
<keyword id="KW-0804">Transcription</keyword>
<keyword id="KW-0808">Transferase</keyword>
<keyword id="KW-0862">Zinc</keyword>
<sequence>MIDRYKHQQLRIGSVSPQQIRAWANKILPNGEIIGEVTKPYTFHYKTNKPEKDGLFCERIFGPIKSGICACGNYRIIGDEKEDPQFCEQCGVEFVDSRIRRYQMGYIKLGCPVTHVWYLKRLPSYIANLLDKPLKELEGLVYCDFSFARPIAKKPTFLRLRGSFEYEIQSWKYSIPLFFTTQGFDKFRNREISTGAVAIREQLADLDLRIILDNSLLEWKELGEEGPAGNDWEDRKIGRRRDFLVRRMELAKHFLRTNIEPEWMVLCLLPVLPPELRPIIQIDGGKLMSSDINELYRRVIYRNNTLIDLLTTSRSTPGELVMCQEKLVQEAVDTLLDNGIRGQPMRDGHNKIYKSFSDVIEGKEGRFRETLLGKRVDYSGRSVIVVGPSLSLHQCGLPREIAIELFQTFVICGLIRQHLASNIGVAKSKIREKGPIIWEILQEVMQGHPVLLNRAPTLHRLGVQAFQPILVEGRAICLHPLVCKGFNADFDGDQMAVHVPLSLEAQAEARLLMFSHMNLLSPTIGDPISIPTQDMLIGLYVLTSGNRRGICANRYNTWNRRNYPDERIDDNSYTYTKEPLFCNSYDAIGAYRQKRINLDSPLWLRWRLDQRLIASREAPIEVHYESLGTSHEIYGHYLIVRSVKKEILSIYIRTTVGHISLYREIEEAIQGFCRACSYGT</sequence>
<dbReference type="EC" id="2.7.7.6" evidence="1"/>
<dbReference type="EMBL" id="DQ864733">
    <property type="protein sequence ID" value="ABI49011.1"/>
    <property type="molecule type" value="Genomic_DNA"/>
</dbReference>
<dbReference type="RefSeq" id="YP_740466.1">
    <property type="nucleotide sequence ID" value="NC_008334.1"/>
</dbReference>
<dbReference type="SMR" id="Q09MI7"/>
<dbReference type="GeneID" id="4271234"/>
<dbReference type="KEGG" id="cit:4271234"/>
<dbReference type="OrthoDB" id="898486at71240"/>
<dbReference type="GO" id="GO:0009507">
    <property type="term" value="C:chloroplast"/>
    <property type="evidence" value="ECO:0007669"/>
    <property type="project" value="UniProtKB-SubCell"/>
</dbReference>
<dbReference type="GO" id="GO:0000428">
    <property type="term" value="C:DNA-directed RNA polymerase complex"/>
    <property type="evidence" value="ECO:0007669"/>
    <property type="project" value="UniProtKB-KW"/>
</dbReference>
<dbReference type="GO" id="GO:0005739">
    <property type="term" value="C:mitochondrion"/>
    <property type="evidence" value="ECO:0007669"/>
    <property type="project" value="GOC"/>
</dbReference>
<dbReference type="GO" id="GO:0003677">
    <property type="term" value="F:DNA binding"/>
    <property type="evidence" value="ECO:0007669"/>
    <property type="project" value="UniProtKB-UniRule"/>
</dbReference>
<dbReference type="GO" id="GO:0003899">
    <property type="term" value="F:DNA-directed RNA polymerase activity"/>
    <property type="evidence" value="ECO:0007669"/>
    <property type="project" value="UniProtKB-UniRule"/>
</dbReference>
<dbReference type="GO" id="GO:0000287">
    <property type="term" value="F:magnesium ion binding"/>
    <property type="evidence" value="ECO:0007669"/>
    <property type="project" value="UniProtKB-UniRule"/>
</dbReference>
<dbReference type="GO" id="GO:0008270">
    <property type="term" value="F:zinc ion binding"/>
    <property type="evidence" value="ECO:0007669"/>
    <property type="project" value="UniProtKB-UniRule"/>
</dbReference>
<dbReference type="GO" id="GO:0006351">
    <property type="term" value="P:DNA-templated transcription"/>
    <property type="evidence" value="ECO:0007669"/>
    <property type="project" value="UniProtKB-UniRule"/>
</dbReference>
<dbReference type="FunFam" id="4.10.860.120:FF:000007">
    <property type="entry name" value="DNA-directed RNA polymerase subunit gamma"/>
    <property type="match status" value="1"/>
</dbReference>
<dbReference type="Gene3D" id="1.10.40.90">
    <property type="match status" value="1"/>
</dbReference>
<dbReference type="Gene3D" id="2.40.40.20">
    <property type="match status" value="1"/>
</dbReference>
<dbReference type="Gene3D" id="4.10.860.120">
    <property type="entry name" value="RNA polymerase II, clamp domain"/>
    <property type="match status" value="1"/>
</dbReference>
<dbReference type="Gene3D" id="1.10.274.100">
    <property type="entry name" value="RNA polymerase Rpb1, domain 3"/>
    <property type="match status" value="1"/>
</dbReference>
<dbReference type="HAMAP" id="MF_01323">
    <property type="entry name" value="RNApol_bact_RpoC1"/>
    <property type="match status" value="1"/>
</dbReference>
<dbReference type="InterPro" id="IPR045867">
    <property type="entry name" value="DNA-dir_RpoC_beta_prime"/>
</dbReference>
<dbReference type="InterPro" id="IPR000722">
    <property type="entry name" value="RNA_pol_asu"/>
</dbReference>
<dbReference type="InterPro" id="IPR006592">
    <property type="entry name" value="RNA_pol_N"/>
</dbReference>
<dbReference type="InterPro" id="IPR007080">
    <property type="entry name" value="RNA_pol_Rpb1_1"/>
</dbReference>
<dbReference type="InterPro" id="IPR042102">
    <property type="entry name" value="RNA_pol_Rpb1_3_sf"/>
</dbReference>
<dbReference type="InterPro" id="IPR044893">
    <property type="entry name" value="RNA_pol_Rpb1_clamp_domain"/>
</dbReference>
<dbReference type="InterPro" id="IPR034678">
    <property type="entry name" value="RNApol_RpoC1"/>
</dbReference>
<dbReference type="PANTHER" id="PTHR19376">
    <property type="entry name" value="DNA-DIRECTED RNA POLYMERASE"/>
    <property type="match status" value="1"/>
</dbReference>
<dbReference type="PANTHER" id="PTHR19376:SF54">
    <property type="entry name" value="DNA-DIRECTED RNA POLYMERASE SUBUNIT BETA"/>
    <property type="match status" value="1"/>
</dbReference>
<dbReference type="Pfam" id="PF04997">
    <property type="entry name" value="RNA_pol_Rpb1_1"/>
    <property type="match status" value="2"/>
</dbReference>
<dbReference type="Pfam" id="PF00623">
    <property type="entry name" value="RNA_pol_Rpb1_2"/>
    <property type="match status" value="2"/>
</dbReference>
<dbReference type="SMART" id="SM00663">
    <property type="entry name" value="RPOLA_N"/>
    <property type="match status" value="1"/>
</dbReference>
<dbReference type="SUPFAM" id="SSF64484">
    <property type="entry name" value="beta and beta-prime subunits of DNA dependent RNA-polymerase"/>
    <property type="match status" value="1"/>
</dbReference>
<organism>
    <name type="scientific">Citrus sinensis</name>
    <name type="common">Sweet orange</name>
    <name type="synonym">Citrus aurantium var. sinensis</name>
    <dbReference type="NCBI Taxonomy" id="2711"/>
    <lineage>
        <taxon>Eukaryota</taxon>
        <taxon>Viridiplantae</taxon>
        <taxon>Streptophyta</taxon>
        <taxon>Embryophyta</taxon>
        <taxon>Tracheophyta</taxon>
        <taxon>Spermatophyta</taxon>
        <taxon>Magnoliopsida</taxon>
        <taxon>eudicotyledons</taxon>
        <taxon>Gunneridae</taxon>
        <taxon>Pentapetalae</taxon>
        <taxon>rosids</taxon>
        <taxon>malvids</taxon>
        <taxon>Sapindales</taxon>
        <taxon>Rutaceae</taxon>
        <taxon>Aurantioideae</taxon>
        <taxon>Citrus</taxon>
    </lineage>
</organism>
<geneLocation type="chloroplast"/>
<feature type="chain" id="PRO_0000277163" description="DNA-directed RNA polymerase subunit beta'">
    <location>
        <begin position="1"/>
        <end position="680"/>
    </location>
</feature>
<feature type="binding site" evidence="1">
    <location>
        <position position="69"/>
    </location>
    <ligand>
        <name>Zn(2+)</name>
        <dbReference type="ChEBI" id="CHEBI:29105"/>
    </ligand>
</feature>
<feature type="binding site" evidence="1">
    <location>
        <position position="71"/>
    </location>
    <ligand>
        <name>Zn(2+)</name>
        <dbReference type="ChEBI" id="CHEBI:29105"/>
    </ligand>
</feature>
<feature type="binding site" evidence="1">
    <location>
        <position position="87"/>
    </location>
    <ligand>
        <name>Zn(2+)</name>
        <dbReference type="ChEBI" id="CHEBI:29105"/>
    </ligand>
</feature>
<feature type="binding site" evidence="1">
    <location>
        <position position="90"/>
    </location>
    <ligand>
        <name>Zn(2+)</name>
        <dbReference type="ChEBI" id="CHEBI:29105"/>
    </ligand>
</feature>
<feature type="binding site" evidence="1">
    <location>
        <position position="489"/>
    </location>
    <ligand>
        <name>Mg(2+)</name>
        <dbReference type="ChEBI" id="CHEBI:18420"/>
    </ligand>
</feature>
<feature type="binding site" evidence="1">
    <location>
        <position position="491"/>
    </location>
    <ligand>
        <name>Mg(2+)</name>
        <dbReference type="ChEBI" id="CHEBI:18420"/>
    </ligand>
</feature>
<feature type="binding site" evidence="1">
    <location>
        <position position="493"/>
    </location>
    <ligand>
        <name>Mg(2+)</name>
        <dbReference type="ChEBI" id="CHEBI:18420"/>
    </ligand>
</feature>